<comment type="function">
    <text evidence="4">Aldose sugar dehydrogenase with broad substrate specificity. The physiological substrate is unknown. Can oxidize glucose to gluconolactone. Can also utilize D-arabinose, L-arabinose and 2-deoxy-glucose. Has higher activity towards oligomeric sugars, such as maltose, maltotriose or cellobiose. It may function to input sugar-derived electrons into the respiratory network.</text>
</comment>
<comment type="cofactor">
    <cofactor evidence="4">
        <name>Ca(2+)</name>
        <dbReference type="ChEBI" id="CHEBI:29108"/>
    </cofactor>
    <text evidence="4">Binds 2 calcium ions per monomer.</text>
</comment>
<comment type="cofactor">
    <cofactor>
        <name>pyrroloquinoline quinone</name>
        <dbReference type="ChEBI" id="CHEBI:58442"/>
    </cofactor>
</comment>
<comment type="subunit">
    <text evidence="4">Monomer.</text>
</comment>
<comment type="subcellular location">
    <subcellularLocation>
        <location evidence="3">Cell outer membrane</location>
    </subcellularLocation>
</comment>
<comment type="similarity">
    <text evidence="6">Belongs to the PQQ oxidoreductase GdhB family.</text>
</comment>
<gene>
    <name type="primary">yliI</name>
    <name type="ordered locus">b0837</name>
    <name type="ordered locus">JW0821</name>
</gene>
<reference key="1">
    <citation type="journal article" date="1996" name="DNA Res.">
        <title>A 718-kb DNA sequence of the Escherichia coli K-12 genome corresponding to the 12.7-28.0 min region on the linkage map.</title>
        <authorList>
            <person name="Oshima T."/>
            <person name="Aiba H."/>
            <person name="Baba T."/>
            <person name="Fujita K."/>
            <person name="Hayashi K."/>
            <person name="Honjo A."/>
            <person name="Ikemoto K."/>
            <person name="Inada T."/>
            <person name="Itoh T."/>
            <person name="Kajihara M."/>
            <person name="Kanai K."/>
            <person name="Kashimoto K."/>
            <person name="Kimura S."/>
            <person name="Kitagawa M."/>
            <person name="Makino K."/>
            <person name="Masuda S."/>
            <person name="Miki T."/>
            <person name="Mizobuchi K."/>
            <person name="Mori H."/>
            <person name="Motomura K."/>
            <person name="Nakamura Y."/>
            <person name="Nashimoto H."/>
            <person name="Nishio Y."/>
            <person name="Saito N."/>
            <person name="Sampei G."/>
            <person name="Seki Y."/>
            <person name="Tagami H."/>
            <person name="Takemoto K."/>
            <person name="Wada C."/>
            <person name="Yamamoto Y."/>
            <person name="Yano M."/>
            <person name="Horiuchi T."/>
        </authorList>
    </citation>
    <scope>NUCLEOTIDE SEQUENCE [LARGE SCALE GENOMIC DNA]</scope>
    <source>
        <strain>K12 / W3110 / ATCC 27325 / DSM 5911</strain>
    </source>
</reference>
<reference key="2">
    <citation type="journal article" date="1997" name="Science">
        <title>The complete genome sequence of Escherichia coli K-12.</title>
        <authorList>
            <person name="Blattner F.R."/>
            <person name="Plunkett G. III"/>
            <person name="Bloch C.A."/>
            <person name="Perna N.T."/>
            <person name="Burland V."/>
            <person name="Riley M."/>
            <person name="Collado-Vides J."/>
            <person name="Glasner J.D."/>
            <person name="Rode C.K."/>
            <person name="Mayhew G.F."/>
            <person name="Gregor J."/>
            <person name="Davis N.W."/>
            <person name="Kirkpatrick H.A."/>
            <person name="Goeden M.A."/>
            <person name="Rose D.J."/>
            <person name="Mau B."/>
            <person name="Shao Y."/>
        </authorList>
    </citation>
    <scope>NUCLEOTIDE SEQUENCE [LARGE SCALE GENOMIC DNA]</scope>
    <source>
        <strain>K12 / MG1655 / ATCC 47076</strain>
    </source>
</reference>
<reference key="3">
    <citation type="journal article" date="2006" name="Mol. Syst. Biol.">
        <title>Highly accurate genome sequences of Escherichia coli K-12 strains MG1655 and W3110.</title>
        <authorList>
            <person name="Hayashi K."/>
            <person name="Morooka N."/>
            <person name="Yamamoto Y."/>
            <person name="Fujita K."/>
            <person name="Isono K."/>
            <person name="Choi S."/>
            <person name="Ohtsubo E."/>
            <person name="Baba T."/>
            <person name="Wanner B.L."/>
            <person name="Mori H."/>
            <person name="Horiuchi T."/>
        </authorList>
    </citation>
    <scope>NUCLEOTIDE SEQUENCE [LARGE SCALE GENOMIC DNA]</scope>
    <source>
        <strain>K12 / W3110 / ATCC 27325 / DSM 5911</strain>
    </source>
</reference>
<reference key="4">
    <citation type="journal article" date="2006" name="Protein Sci.">
        <title>New Escherichia coli outer membrane proteins identified through prediction and experimental verification.</title>
        <authorList>
            <person name="Marani P."/>
            <person name="Wagner S."/>
            <person name="Baars L."/>
            <person name="Genevaux P."/>
            <person name="de Gier J.W."/>
            <person name="Nilsson I."/>
            <person name="Casadio R."/>
            <person name="von Heijne G."/>
        </authorList>
    </citation>
    <scope>SUBCELLULAR LOCATION</scope>
    <source>
        <strain>K12 / MG1655 / ATCC 47076</strain>
    </source>
</reference>
<reference key="5">
    <citation type="journal article" date="2006" name="J. Biol. Chem.">
        <title>Soluble aldose sugar dehydrogenase from Escherichia coli: a highly exposed active site conferring broad substrate specificity.</title>
        <authorList>
            <person name="Southall S.M."/>
            <person name="Doel J.J."/>
            <person name="Richardson D.J."/>
            <person name="Oubrie A."/>
        </authorList>
    </citation>
    <scope>X-RAY CRYSTALLOGRAPHY (1.5 ANGSTROMS) OF 21-370 IN COMPLEX WITH PQQ AND CALCIUM</scope>
    <scope>FUNCTION</scope>
    <scope>SUBUNIT</scope>
    <scope>IDENTIFICATION BY MASS SPECTROMETRY</scope>
</reference>
<feature type="signal peptide" evidence="2">
    <location>
        <begin position="1"/>
        <end position="20"/>
    </location>
</feature>
<feature type="chain" id="PRO_0000025584" description="Aldose sugar dehydrogenase YliI">
    <location>
        <begin position="21"/>
        <end position="371"/>
    </location>
</feature>
<feature type="region of interest" description="PQQ">
    <location>
        <begin position="214"/>
        <end position="215"/>
    </location>
</feature>
<feature type="region of interest" description="PQQ">
    <location>
        <begin position="312"/>
        <end position="314"/>
    </location>
</feature>
<feature type="region of interest" description="PQQ">
    <location>
        <begin position="341"/>
        <end position="343"/>
    </location>
</feature>
<feature type="active site" description="Proton acceptor" evidence="1">
    <location>
        <position position="147"/>
    </location>
</feature>
<feature type="binding site" evidence="4">
    <location>
        <position position="82"/>
    </location>
    <ligand>
        <name>pyrroloquinoline quinone</name>
        <dbReference type="ChEBI" id="CHEBI:58442"/>
    </ligand>
</feature>
<feature type="binding site" evidence="4">
    <location>
        <position position="240"/>
    </location>
    <ligand>
        <name>Ca(2+)</name>
        <dbReference type="ChEBI" id="CHEBI:29108"/>
    </ligand>
</feature>
<feature type="binding site" evidence="4">
    <location>
        <position position="250"/>
    </location>
    <ligand>
        <name>Ca(2+)</name>
        <dbReference type="ChEBI" id="CHEBI:29108"/>
    </ligand>
</feature>
<feature type="binding site" evidence="4">
    <location>
        <position position="261"/>
    </location>
    <ligand>
        <name>pyrroloquinoline quinone</name>
        <dbReference type="ChEBI" id="CHEBI:58442"/>
    </ligand>
</feature>
<feature type="strand" evidence="7">
    <location>
        <begin position="25"/>
        <end position="42"/>
    </location>
</feature>
<feature type="strand" evidence="7">
    <location>
        <begin position="49"/>
        <end position="53"/>
    </location>
</feature>
<feature type="turn" evidence="7">
    <location>
        <begin position="54"/>
        <end position="56"/>
    </location>
</feature>
<feature type="strand" evidence="7">
    <location>
        <begin position="57"/>
        <end position="62"/>
    </location>
</feature>
<feature type="turn" evidence="7">
    <location>
        <begin position="63"/>
        <end position="65"/>
    </location>
</feature>
<feature type="strand" evidence="7">
    <location>
        <begin position="84"/>
        <end position="90"/>
    </location>
</feature>
<feature type="helix" evidence="7">
    <location>
        <begin position="94"/>
        <end position="97"/>
    </location>
</feature>
<feature type="strand" evidence="7">
    <location>
        <begin position="99"/>
        <end position="107"/>
    </location>
</feature>
<feature type="strand" evidence="7">
    <location>
        <begin position="109"/>
        <end position="111"/>
    </location>
</feature>
<feature type="strand" evidence="7">
    <location>
        <begin position="113"/>
        <end position="122"/>
    </location>
</feature>
<feature type="strand" evidence="7">
    <location>
        <begin position="126"/>
        <end position="137"/>
    </location>
</feature>
<feature type="strand" evidence="7">
    <location>
        <begin position="143"/>
        <end position="146"/>
    </location>
</feature>
<feature type="strand" evidence="7">
    <location>
        <begin position="152"/>
        <end position="154"/>
    </location>
</feature>
<feature type="strand" evidence="7">
    <location>
        <begin position="156"/>
        <end position="164"/>
    </location>
</feature>
<feature type="helix" evidence="7">
    <location>
        <begin position="170"/>
        <end position="174"/>
    </location>
</feature>
<feature type="strand" evidence="7">
    <location>
        <begin position="182"/>
        <end position="187"/>
    </location>
</feature>
<feature type="turn" evidence="7">
    <location>
        <begin position="197"/>
        <end position="200"/>
    </location>
</feature>
<feature type="strand" evidence="7">
    <location>
        <begin position="208"/>
        <end position="211"/>
    </location>
</feature>
<feature type="strand" evidence="7">
    <location>
        <begin position="214"/>
        <end position="222"/>
    </location>
</feature>
<feature type="turn" evidence="7">
    <location>
        <begin position="223"/>
        <end position="226"/>
    </location>
</feature>
<feature type="strand" evidence="7">
    <location>
        <begin position="227"/>
        <end position="233"/>
    </location>
</feature>
<feature type="strand" evidence="7">
    <location>
        <begin position="235"/>
        <end position="237"/>
    </location>
</feature>
<feature type="strand" evidence="7">
    <location>
        <begin position="239"/>
        <end position="242"/>
    </location>
</feature>
<feature type="turn" evidence="7">
    <location>
        <begin position="252"/>
        <end position="254"/>
    </location>
</feature>
<feature type="strand" evidence="7">
    <location>
        <begin position="257"/>
        <end position="259"/>
    </location>
</feature>
<feature type="strand" evidence="7">
    <location>
        <begin position="271"/>
        <end position="273"/>
    </location>
</feature>
<feature type="strand" evidence="7">
    <location>
        <begin position="281"/>
        <end position="286"/>
    </location>
</feature>
<feature type="strand" evidence="7">
    <location>
        <begin position="290"/>
        <end position="296"/>
    </location>
</feature>
<feature type="strand" evidence="7">
    <location>
        <begin position="299"/>
        <end position="301"/>
    </location>
</feature>
<feature type="helix" evidence="7">
    <location>
        <begin position="302"/>
        <end position="304"/>
    </location>
</feature>
<feature type="strand" evidence="7">
    <location>
        <begin position="307"/>
        <end position="312"/>
    </location>
</feature>
<feature type="turn" evidence="7">
    <location>
        <begin position="313"/>
        <end position="316"/>
    </location>
</feature>
<feature type="strand" evidence="7">
    <location>
        <begin position="317"/>
        <end position="324"/>
    </location>
</feature>
<feature type="strand" evidence="7">
    <location>
        <begin position="327"/>
        <end position="335"/>
    </location>
</feature>
<feature type="helix" evidence="7">
    <location>
        <begin position="336"/>
        <end position="338"/>
    </location>
</feature>
<feature type="strand" evidence="7">
    <location>
        <begin position="342"/>
        <end position="347"/>
    </location>
</feature>
<feature type="strand" evidence="7">
    <location>
        <begin position="353"/>
        <end position="357"/>
    </location>
</feature>
<feature type="strand" evidence="7">
    <location>
        <begin position="362"/>
        <end position="368"/>
    </location>
</feature>
<keyword id="KW-0002">3D-structure</keyword>
<keyword id="KW-0106">Calcium</keyword>
<keyword id="KW-0998">Cell outer membrane</keyword>
<keyword id="KW-0472">Membrane</keyword>
<keyword id="KW-0479">Metal-binding</keyword>
<keyword id="KW-0560">Oxidoreductase</keyword>
<keyword id="KW-0634">PQQ</keyword>
<keyword id="KW-1185">Reference proteome</keyword>
<keyword id="KW-0732">Signal</keyword>
<evidence type="ECO:0000250" key="1"/>
<evidence type="ECO:0000255" key="2"/>
<evidence type="ECO:0000269" key="3">
    <source>
    </source>
</evidence>
<evidence type="ECO:0000269" key="4">
    <source>
    </source>
</evidence>
<evidence type="ECO:0000303" key="5">
    <source>
    </source>
</evidence>
<evidence type="ECO:0000305" key="6"/>
<evidence type="ECO:0007829" key="7">
    <source>
        <dbReference type="PDB" id="2G8S"/>
    </source>
</evidence>
<name>YLII_ECOLI</name>
<protein>
    <recommendedName>
        <fullName evidence="5">Aldose sugar dehydrogenase YliI</fullName>
        <shortName evidence="5">Asd</shortName>
        <ecNumber>1.1.5.-</ecNumber>
    </recommendedName>
    <alternativeName>
        <fullName>Soluble aldose sugar dehydrogenase YliI</fullName>
    </alternativeName>
</protein>
<dbReference type="EC" id="1.1.5.-"/>
<dbReference type="EMBL" id="U00096">
    <property type="protein sequence ID" value="AAC73924.1"/>
    <property type="molecule type" value="Genomic_DNA"/>
</dbReference>
<dbReference type="EMBL" id="AP009048">
    <property type="protein sequence ID" value="BAA35540.1"/>
    <property type="molecule type" value="Genomic_DNA"/>
</dbReference>
<dbReference type="PIR" id="E64821">
    <property type="entry name" value="E64821"/>
</dbReference>
<dbReference type="RefSeq" id="NP_415358.1">
    <property type="nucleotide sequence ID" value="NC_000913.3"/>
</dbReference>
<dbReference type="RefSeq" id="WP_000555031.1">
    <property type="nucleotide sequence ID" value="NZ_SSZK01000002.1"/>
</dbReference>
<dbReference type="PDB" id="2G8S">
    <property type="method" value="X-ray"/>
    <property type="resolution" value="1.50 A"/>
    <property type="chains" value="A/B=21-370"/>
</dbReference>
<dbReference type="PDBsum" id="2G8S"/>
<dbReference type="SMR" id="P75804"/>
<dbReference type="BioGRID" id="4261449">
    <property type="interactions" value="282"/>
</dbReference>
<dbReference type="FunCoup" id="P75804">
    <property type="interactions" value="99"/>
</dbReference>
<dbReference type="IntAct" id="P75804">
    <property type="interactions" value="2"/>
</dbReference>
<dbReference type="STRING" id="511145.b0837"/>
<dbReference type="jPOST" id="P75804"/>
<dbReference type="PaxDb" id="511145-b0837"/>
<dbReference type="EnsemblBacteria" id="AAC73924">
    <property type="protein sequence ID" value="AAC73924"/>
    <property type="gene ID" value="b0837"/>
</dbReference>
<dbReference type="GeneID" id="93776585"/>
<dbReference type="GeneID" id="945467"/>
<dbReference type="KEGG" id="ecj:JW0821"/>
<dbReference type="KEGG" id="eco:b0837"/>
<dbReference type="KEGG" id="ecoc:C3026_05240"/>
<dbReference type="PATRIC" id="fig|1411691.4.peg.1441"/>
<dbReference type="EchoBASE" id="EB3253"/>
<dbReference type="eggNOG" id="COG2133">
    <property type="taxonomic scope" value="Bacteria"/>
</dbReference>
<dbReference type="HOGENOM" id="CLU_012253_1_1_6"/>
<dbReference type="InParanoid" id="P75804"/>
<dbReference type="OMA" id="WEKSPGI"/>
<dbReference type="OrthoDB" id="9770043at2"/>
<dbReference type="PhylomeDB" id="P75804"/>
<dbReference type="BioCyc" id="EcoCyc:G6437-MONOMER"/>
<dbReference type="BioCyc" id="MetaCyc:G6437-MONOMER"/>
<dbReference type="EvolutionaryTrace" id="P75804"/>
<dbReference type="PRO" id="PR:P75804"/>
<dbReference type="Proteomes" id="UP000000625">
    <property type="component" value="Chromosome"/>
</dbReference>
<dbReference type="GO" id="GO:0009279">
    <property type="term" value="C:cell outer membrane"/>
    <property type="evidence" value="ECO:0007669"/>
    <property type="project" value="UniProtKB-SubCell"/>
</dbReference>
<dbReference type="GO" id="GO:0030288">
    <property type="term" value="C:outer membrane-bounded periplasmic space"/>
    <property type="evidence" value="ECO:0000314"/>
    <property type="project" value="EcoCyc"/>
</dbReference>
<dbReference type="GO" id="GO:0005509">
    <property type="term" value="F:calcium ion binding"/>
    <property type="evidence" value="ECO:0000314"/>
    <property type="project" value="EcoCyc"/>
</dbReference>
<dbReference type="GO" id="GO:0016901">
    <property type="term" value="F:oxidoreductase activity, acting on the CH-OH group of donors, quinone or similar compound as acceptor"/>
    <property type="evidence" value="ECO:0000314"/>
    <property type="project" value="EcoCyc"/>
</dbReference>
<dbReference type="GO" id="GO:0070968">
    <property type="term" value="F:pyrroloquinoline quinone binding"/>
    <property type="evidence" value="ECO:0000314"/>
    <property type="project" value="EcoCyc"/>
</dbReference>
<dbReference type="FunFam" id="2.120.10.30:FF:000052">
    <property type="entry name" value="Soluble aldose sugar dehydrogenase"/>
    <property type="match status" value="1"/>
</dbReference>
<dbReference type="Gene3D" id="2.120.10.30">
    <property type="entry name" value="TolB, C-terminal domain"/>
    <property type="match status" value="1"/>
</dbReference>
<dbReference type="InterPro" id="IPR011042">
    <property type="entry name" value="6-blade_b-propeller_TolB-like"/>
</dbReference>
<dbReference type="InterPro" id="IPR012938">
    <property type="entry name" value="Glc/Sorbosone_DH"/>
</dbReference>
<dbReference type="InterPro" id="IPR011041">
    <property type="entry name" value="Quinoprot_gluc/sorb_DH_b-prop"/>
</dbReference>
<dbReference type="PANTHER" id="PTHR19328:SF75">
    <property type="entry name" value="ALDOSE SUGAR DEHYDROGENASE YLII"/>
    <property type="match status" value="1"/>
</dbReference>
<dbReference type="PANTHER" id="PTHR19328">
    <property type="entry name" value="HEDGEHOG-INTERACTING PROTEIN"/>
    <property type="match status" value="1"/>
</dbReference>
<dbReference type="Pfam" id="PF07995">
    <property type="entry name" value="GSDH"/>
    <property type="match status" value="1"/>
</dbReference>
<dbReference type="SUPFAM" id="SSF50952">
    <property type="entry name" value="Soluble quinoprotein glucose dehydrogenase"/>
    <property type="match status" value="1"/>
</dbReference>
<organism>
    <name type="scientific">Escherichia coli (strain K12)</name>
    <dbReference type="NCBI Taxonomy" id="83333"/>
    <lineage>
        <taxon>Bacteria</taxon>
        <taxon>Pseudomonadati</taxon>
        <taxon>Pseudomonadota</taxon>
        <taxon>Gammaproteobacteria</taxon>
        <taxon>Enterobacterales</taxon>
        <taxon>Enterobacteriaceae</taxon>
        <taxon>Escherichia</taxon>
    </lineage>
</organism>
<sequence>MHRQSFFLVPLICLSSALWAAPATVNVEVLQDKLDHPWALAFLPDNHGMLITLRGGELRHWQAGKGLSAPLSGVPDVWAHGQGGLLDVVLAPDFAQSRRIWLSYSEVGDDGKAGTAVGYGRLSDDLSKVTDFRTVFRQMPKLSTGNHFGGRLVFDGKGYLFIALGENNQRPTAQDLDKLQGKLVRLTDQGEIPDDNPFIKESGARAEIWSYGIRNPQGMAMNPWSNALWLNEHGPRGGDEINIPQKGKNYGWPLATWGINYSGFKIPEAKGEIVAGTEQPVFYWKDSPAVSGMAFYNSDKFPQWQQKLFIGALKDKDVIVMSVNGDKVTEDGRILTDRGQRIRDVRTGPDGYLYVLTDESSGELLKVSPRN</sequence>
<accession>P75804</accession>
<accession>Q9R7R6</accession>
<proteinExistence type="evidence at protein level"/>